<evidence type="ECO:0000250" key="1"/>
<evidence type="ECO:0000305" key="2"/>
<comment type="function">
    <text evidence="1">Weakly blocks contraction of smooth muscle elicited by high potassium-induced depolarization, but does not block caffeine-stimulated contraction. May target voltage-gated calcium channels on smooth muscle (By similarity).</text>
</comment>
<comment type="subcellular location">
    <subcellularLocation>
        <location>Secreted</location>
    </subcellularLocation>
</comment>
<comment type="tissue specificity">
    <text>Expressed by the venom gland.</text>
</comment>
<comment type="PTM">
    <text evidence="1">Contains 8 disulfide bonds.</text>
</comment>
<comment type="similarity">
    <text evidence="2">Belongs to the CRISP family.</text>
</comment>
<dbReference type="GO" id="GO:0005576">
    <property type="term" value="C:extracellular region"/>
    <property type="evidence" value="ECO:0007669"/>
    <property type="project" value="UniProtKB-SubCell"/>
</dbReference>
<dbReference type="GO" id="GO:0005246">
    <property type="term" value="F:calcium channel regulator activity"/>
    <property type="evidence" value="ECO:0007669"/>
    <property type="project" value="UniProtKB-KW"/>
</dbReference>
<dbReference type="GO" id="GO:0090729">
    <property type="term" value="F:toxin activity"/>
    <property type="evidence" value="ECO:0007669"/>
    <property type="project" value="UniProtKB-KW"/>
</dbReference>
<sequence length="15" mass="1734">SVDFDSESPRKPEIQ</sequence>
<feature type="chain" id="PRO_0000428805" description="Cysteine-rich venom protein Bco13">
    <location>
        <begin position="1"/>
        <end position="15" status="greater than"/>
    </location>
</feature>
<feature type="non-terminal residue">
    <location>
        <position position="15"/>
    </location>
</feature>
<protein>
    <recommendedName>
        <fullName>Cysteine-rich venom protein Bco13</fullName>
    </recommendedName>
</protein>
<keyword id="KW-0108">Calcium channel impairing toxin</keyword>
<keyword id="KW-0903">Direct protein sequencing</keyword>
<keyword id="KW-1015">Disulfide bond</keyword>
<keyword id="KW-0872">Ion channel impairing toxin</keyword>
<keyword id="KW-0528">Neurotoxin</keyword>
<keyword id="KW-0964">Secreted</keyword>
<keyword id="KW-0800">Toxin</keyword>
<organism>
    <name type="scientific">Bothrops cotiara</name>
    <name type="common">Cotiara</name>
    <name type="synonym">Rhinocerophis cotiara</name>
    <dbReference type="NCBI Taxonomy" id="8727"/>
    <lineage>
        <taxon>Eukaryota</taxon>
        <taxon>Metazoa</taxon>
        <taxon>Chordata</taxon>
        <taxon>Craniata</taxon>
        <taxon>Vertebrata</taxon>
        <taxon>Euteleostomi</taxon>
        <taxon>Lepidosauria</taxon>
        <taxon>Squamata</taxon>
        <taxon>Bifurcata</taxon>
        <taxon>Unidentata</taxon>
        <taxon>Episquamata</taxon>
        <taxon>Toxicofera</taxon>
        <taxon>Serpentes</taxon>
        <taxon>Colubroidea</taxon>
        <taxon>Viperidae</taxon>
        <taxon>Crotalinae</taxon>
        <taxon>Bothrops</taxon>
    </lineage>
</organism>
<accession>P0DMG5</accession>
<name>CRVP_BOTCO</name>
<reference key="1">
    <citation type="journal article" date="2008" name="J. Proteomics">
        <title>Snake venomics of the Brazilian pitvipers Bothrops cotiara and Bothrops fonsecai. Identification of taxonomy markers.</title>
        <authorList>
            <person name="Tashima A.K."/>
            <person name="Sanz L."/>
            <person name="Camargo A.C."/>
            <person name="Serrano S.M."/>
            <person name="Calvete J.J."/>
        </authorList>
    </citation>
    <scope>PROTEIN SEQUENCE</scope>
    <source>
        <tissue>Venom</tissue>
    </source>
</reference>
<proteinExistence type="evidence at protein level"/>